<name>RSMH_METS4</name>
<feature type="chain" id="PRO_0000386979" description="Ribosomal RNA small subunit methyltransferase H">
    <location>
        <begin position="1"/>
        <end position="337"/>
    </location>
</feature>
<feature type="region of interest" description="Disordered" evidence="2">
    <location>
        <begin position="286"/>
        <end position="316"/>
    </location>
</feature>
<feature type="compositionally biased region" description="Low complexity" evidence="2">
    <location>
        <begin position="289"/>
        <end position="300"/>
    </location>
</feature>
<feature type="binding site" evidence="1">
    <location>
        <begin position="35"/>
        <end position="37"/>
    </location>
    <ligand>
        <name>S-adenosyl-L-methionine</name>
        <dbReference type="ChEBI" id="CHEBI:59789"/>
    </ligand>
</feature>
<feature type="binding site" evidence="1">
    <location>
        <position position="54"/>
    </location>
    <ligand>
        <name>S-adenosyl-L-methionine</name>
        <dbReference type="ChEBI" id="CHEBI:59789"/>
    </ligand>
</feature>
<feature type="binding site" evidence="1">
    <location>
        <position position="81"/>
    </location>
    <ligand>
        <name>S-adenosyl-L-methionine</name>
        <dbReference type="ChEBI" id="CHEBI:59789"/>
    </ligand>
</feature>
<feature type="binding site" evidence="1">
    <location>
        <position position="102"/>
    </location>
    <ligand>
        <name>S-adenosyl-L-methionine</name>
        <dbReference type="ChEBI" id="CHEBI:59789"/>
    </ligand>
</feature>
<feature type="binding site" evidence="1">
    <location>
        <position position="109"/>
    </location>
    <ligand>
        <name>S-adenosyl-L-methionine</name>
        <dbReference type="ChEBI" id="CHEBI:59789"/>
    </ligand>
</feature>
<comment type="function">
    <text evidence="1">Specifically methylates the N4 position of cytidine in position 1402 (C1402) of 16S rRNA.</text>
</comment>
<comment type="catalytic activity">
    <reaction evidence="1">
        <text>cytidine(1402) in 16S rRNA + S-adenosyl-L-methionine = N(4)-methylcytidine(1402) in 16S rRNA + S-adenosyl-L-homocysteine + H(+)</text>
        <dbReference type="Rhea" id="RHEA:42928"/>
        <dbReference type="Rhea" id="RHEA-COMP:10286"/>
        <dbReference type="Rhea" id="RHEA-COMP:10287"/>
        <dbReference type="ChEBI" id="CHEBI:15378"/>
        <dbReference type="ChEBI" id="CHEBI:57856"/>
        <dbReference type="ChEBI" id="CHEBI:59789"/>
        <dbReference type="ChEBI" id="CHEBI:74506"/>
        <dbReference type="ChEBI" id="CHEBI:82748"/>
        <dbReference type="EC" id="2.1.1.199"/>
    </reaction>
</comment>
<comment type="subcellular location">
    <subcellularLocation>
        <location evidence="1">Cytoplasm</location>
    </subcellularLocation>
</comment>
<comment type="similarity">
    <text evidence="1">Belongs to the methyltransferase superfamily. RsmH family.</text>
</comment>
<proteinExistence type="inferred from homology"/>
<gene>
    <name evidence="1" type="primary">rsmH</name>
    <name type="synonym">mraW</name>
    <name type="ordered locus">M446_0263</name>
</gene>
<sequence length="337" mass="35333">MSGAPHIPVLLAEVRGVLRLGEGPGVVVDGTFGAGGYSRALLAADPDLRVIAIDRDPTAVAAGQELAAAAGGRLRLVQGRFGDLDAIVRREGVEAVDGVVLDIGVSSMQLDRAERGFSFRADGPLDMRMEGAGTSAADLVNGAPEAELADIIYHFGEERRSRAVARAILEARRRAPIATTGALAEIVAGVVRAEPGSGIHPATRTFQALRIAVNDELGELNRALHAAERILRPGGRLAVVTFHSLEDRIVKQFFSARSGRAVSASRHLPMAERPVPRSFTLVTKGPVGPSEAEAAANPRARSAKLRAGERTDAPAPEPLAALAALAALPPRERGGRR</sequence>
<keyword id="KW-0963">Cytoplasm</keyword>
<keyword id="KW-0489">Methyltransferase</keyword>
<keyword id="KW-0698">rRNA processing</keyword>
<keyword id="KW-0949">S-adenosyl-L-methionine</keyword>
<keyword id="KW-0808">Transferase</keyword>
<reference key="1">
    <citation type="submission" date="2008-02" db="EMBL/GenBank/DDBJ databases">
        <title>Complete sequence of chromosome of Methylobacterium sp. 4-46.</title>
        <authorList>
            <consortium name="US DOE Joint Genome Institute"/>
            <person name="Copeland A."/>
            <person name="Lucas S."/>
            <person name="Lapidus A."/>
            <person name="Glavina del Rio T."/>
            <person name="Dalin E."/>
            <person name="Tice H."/>
            <person name="Bruce D."/>
            <person name="Goodwin L."/>
            <person name="Pitluck S."/>
            <person name="Chertkov O."/>
            <person name="Brettin T."/>
            <person name="Detter J.C."/>
            <person name="Han C."/>
            <person name="Kuske C.R."/>
            <person name="Schmutz J."/>
            <person name="Larimer F."/>
            <person name="Land M."/>
            <person name="Hauser L."/>
            <person name="Kyrpides N."/>
            <person name="Ivanova N."/>
            <person name="Marx C.J."/>
            <person name="Richardson P."/>
        </authorList>
    </citation>
    <scope>NUCLEOTIDE SEQUENCE [LARGE SCALE GENOMIC DNA]</scope>
    <source>
        <strain>4-46</strain>
    </source>
</reference>
<dbReference type="EC" id="2.1.1.199" evidence="1"/>
<dbReference type="EMBL" id="CP000943">
    <property type="protein sequence ID" value="ACA14834.1"/>
    <property type="molecule type" value="Genomic_DNA"/>
</dbReference>
<dbReference type="RefSeq" id="WP_012330252.1">
    <property type="nucleotide sequence ID" value="NC_010511.1"/>
</dbReference>
<dbReference type="SMR" id="B0UFI0"/>
<dbReference type="STRING" id="426117.M446_0263"/>
<dbReference type="KEGG" id="met:M446_0263"/>
<dbReference type="eggNOG" id="COG0275">
    <property type="taxonomic scope" value="Bacteria"/>
</dbReference>
<dbReference type="HOGENOM" id="CLU_038422_1_1_5"/>
<dbReference type="GO" id="GO:0005737">
    <property type="term" value="C:cytoplasm"/>
    <property type="evidence" value="ECO:0007669"/>
    <property type="project" value="UniProtKB-SubCell"/>
</dbReference>
<dbReference type="GO" id="GO:0071424">
    <property type="term" value="F:rRNA (cytosine-N4-)-methyltransferase activity"/>
    <property type="evidence" value="ECO:0007669"/>
    <property type="project" value="UniProtKB-UniRule"/>
</dbReference>
<dbReference type="GO" id="GO:0070475">
    <property type="term" value="P:rRNA base methylation"/>
    <property type="evidence" value="ECO:0007669"/>
    <property type="project" value="UniProtKB-UniRule"/>
</dbReference>
<dbReference type="Gene3D" id="1.10.150.170">
    <property type="entry name" value="Putative methyltransferase TM0872, insert domain"/>
    <property type="match status" value="1"/>
</dbReference>
<dbReference type="Gene3D" id="3.40.50.150">
    <property type="entry name" value="Vaccinia Virus protein VP39"/>
    <property type="match status" value="1"/>
</dbReference>
<dbReference type="HAMAP" id="MF_01007">
    <property type="entry name" value="16SrRNA_methyltr_H"/>
    <property type="match status" value="1"/>
</dbReference>
<dbReference type="InterPro" id="IPR002903">
    <property type="entry name" value="RsmH"/>
</dbReference>
<dbReference type="InterPro" id="IPR023397">
    <property type="entry name" value="SAM-dep_MeTrfase_MraW_recog"/>
</dbReference>
<dbReference type="InterPro" id="IPR029063">
    <property type="entry name" value="SAM-dependent_MTases_sf"/>
</dbReference>
<dbReference type="NCBIfam" id="TIGR00006">
    <property type="entry name" value="16S rRNA (cytosine(1402)-N(4))-methyltransferase RsmH"/>
    <property type="match status" value="1"/>
</dbReference>
<dbReference type="PANTHER" id="PTHR11265:SF0">
    <property type="entry name" value="12S RRNA N4-METHYLCYTIDINE METHYLTRANSFERASE"/>
    <property type="match status" value="1"/>
</dbReference>
<dbReference type="PANTHER" id="PTHR11265">
    <property type="entry name" value="S-ADENOSYL-METHYLTRANSFERASE MRAW"/>
    <property type="match status" value="1"/>
</dbReference>
<dbReference type="Pfam" id="PF01795">
    <property type="entry name" value="Methyltransf_5"/>
    <property type="match status" value="1"/>
</dbReference>
<dbReference type="PIRSF" id="PIRSF004486">
    <property type="entry name" value="MraW"/>
    <property type="match status" value="1"/>
</dbReference>
<dbReference type="SUPFAM" id="SSF81799">
    <property type="entry name" value="Putative methyltransferase TM0872, insert domain"/>
    <property type="match status" value="1"/>
</dbReference>
<dbReference type="SUPFAM" id="SSF53335">
    <property type="entry name" value="S-adenosyl-L-methionine-dependent methyltransferases"/>
    <property type="match status" value="1"/>
</dbReference>
<organism>
    <name type="scientific">Methylobacterium sp. (strain 4-46)</name>
    <dbReference type="NCBI Taxonomy" id="426117"/>
    <lineage>
        <taxon>Bacteria</taxon>
        <taxon>Pseudomonadati</taxon>
        <taxon>Pseudomonadota</taxon>
        <taxon>Alphaproteobacteria</taxon>
        <taxon>Hyphomicrobiales</taxon>
        <taxon>Methylobacteriaceae</taxon>
        <taxon>Methylobacterium</taxon>
    </lineage>
</organism>
<accession>B0UFI0</accession>
<protein>
    <recommendedName>
        <fullName evidence="1">Ribosomal RNA small subunit methyltransferase H</fullName>
        <ecNumber evidence="1">2.1.1.199</ecNumber>
    </recommendedName>
    <alternativeName>
        <fullName evidence="1">16S rRNA m(4)C1402 methyltransferase</fullName>
    </alternativeName>
    <alternativeName>
        <fullName evidence="1">rRNA (cytosine-N(4)-)-methyltransferase RsmH</fullName>
    </alternativeName>
</protein>
<evidence type="ECO:0000255" key="1">
    <source>
        <dbReference type="HAMAP-Rule" id="MF_01007"/>
    </source>
</evidence>
<evidence type="ECO:0000256" key="2">
    <source>
        <dbReference type="SAM" id="MobiDB-lite"/>
    </source>
</evidence>